<keyword id="KW-0997">Cell inner membrane</keyword>
<keyword id="KW-1003">Cell membrane</keyword>
<keyword id="KW-0472">Membrane</keyword>
<keyword id="KW-1185">Reference proteome</keyword>
<keyword id="KW-0346">Stress response</keyword>
<gene>
    <name type="primary">azuC</name>
    <name type="ordered locus">b4663</name>
    <name type="ordered locus">JW1891.1</name>
</gene>
<accession>C1P605</accession>
<protein>
    <recommendedName>
        <fullName>Uncharacterized protein AzuC</fullName>
    </recommendedName>
</protein>
<dbReference type="EMBL" id="U00096">
    <property type="protein sequence ID" value="ACO59997.1"/>
    <property type="molecule type" value="Genomic_DNA"/>
</dbReference>
<dbReference type="EMBL" id="AP009048">
    <property type="status" value="NOT_ANNOTATED_CDS"/>
    <property type="molecule type" value="Genomic_DNA"/>
</dbReference>
<dbReference type="RefSeq" id="WP_010723106.1">
    <property type="nucleotide sequence ID" value="NZ_STEB01000026.1"/>
</dbReference>
<dbReference type="RefSeq" id="YP_002791245.1">
    <property type="nucleotide sequence ID" value="NC_000913.3"/>
</dbReference>
<dbReference type="FunCoup" id="C1P605">
    <property type="interactions" value="1"/>
</dbReference>
<dbReference type="STRING" id="511145.b4663"/>
<dbReference type="PaxDb" id="511145-b4663"/>
<dbReference type="EnsemblBacteria" id="ACO59997">
    <property type="protein sequence ID" value="ACO59997"/>
    <property type="gene ID" value="b4663"/>
</dbReference>
<dbReference type="GeneID" id="7751642"/>
<dbReference type="GeneID" id="93776206"/>
<dbReference type="KEGG" id="eco:b4663"/>
<dbReference type="InParanoid" id="C1P605"/>
<dbReference type="BioCyc" id="EcoCyc:MONOMER0-2880"/>
<dbReference type="BioCyc" id="MetaCyc:MONOMER0-2880"/>
<dbReference type="PRO" id="PR:C1P605"/>
<dbReference type="Proteomes" id="UP000000625">
    <property type="component" value="Chromosome"/>
</dbReference>
<dbReference type="GO" id="GO:0005886">
    <property type="term" value="C:plasma membrane"/>
    <property type="evidence" value="ECO:0000314"/>
    <property type="project" value="EcoCyc"/>
</dbReference>
<dbReference type="GO" id="GO:0008047">
    <property type="term" value="F:enzyme activator activity"/>
    <property type="evidence" value="ECO:0000314"/>
    <property type="project" value="EcoCyc"/>
</dbReference>
<dbReference type="InterPro" id="IPR049862">
    <property type="entry name" value="AzuC"/>
</dbReference>
<dbReference type="NCBIfam" id="NF033642">
    <property type="entry name" value="stress_AzuC"/>
    <property type="match status" value="1"/>
</dbReference>
<comment type="subcellular location">
    <subcellularLocation>
        <location evidence="3 4">Cell inner membrane</location>
        <topology evidence="3 4">Peripheral membrane protein</topology>
    </subcellularLocation>
</comment>
<comment type="induction">
    <text evidence="1 2">Constitutively expressed (PubMed:19121005). Repressed in minimal glycerol medium, at low oxygen, induced by H(2)O(2), the thiol reductant diamide, at 45 degrees Celsius and at pH 5.5 (PubMed:19734316) (at protein level). Transcription is repressed by CRP.</text>
</comment>
<reference key="1">
    <citation type="journal article" date="1997" name="Science">
        <title>The complete genome sequence of Escherichia coli K-12.</title>
        <authorList>
            <person name="Blattner F.R."/>
            <person name="Plunkett G. III"/>
            <person name="Bloch C.A."/>
            <person name="Perna N.T."/>
            <person name="Burland V."/>
            <person name="Riley M."/>
            <person name="Collado-Vides J."/>
            <person name="Glasner J.D."/>
            <person name="Rode C.K."/>
            <person name="Mayhew G.F."/>
            <person name="Gregor J."/>
            <person name="Davis N.W."/>
            <person name="Kirkpatrick H.A."/>
            <person name="Goeden M.A."/>
            <person name="Rose D.J."/>
            <person name="Mau B."/>
            <person name="Shao Y."/>
        </authorList>
    </citation>
    <scope>NUCLEOTIDE SEQUENCE [LARGE SCALE GENOMIC DNA]</scope>
    <source>
        <strain>K12 / MG1655 / ATCC 47076</strain>
    </source>
</reference>
<reference key="2">
    <citation type="journal article" date="2006" name="Mol. Syst. Biol.">
        <title>Highly accurate genome sequences of Escherichia coli K-12 strains MG1655 and W3110.</title>
        <authorList>
            <person name="Hayashi K."/>
            <person name="Morooka N."/>
            <person name="Yamamoto Y."/>
            <person name="Fujita K."/>
            <person name="Isono K."/>
            <person name="Choi S."/>
            <person name="Ohtsubo E."/>
            <person name="Baba T."/>
            <person name="Wanner B.L."/>
            <person name="Mori H."/>
            <person name="Horiuchi T."/>
        </authorList>
    </citation>
    <scope>NUCLEOTIDE SEQUENCE [LARGE SCALE GENOMIC DNA]</scope>
    <source>
        <strain>K12 / W3110 / ATCC 27325 / DSM 5911</strain>
    </source>
</reference>
<reference key="3">
    <citation type="journal article" date="2008" name="Mol. Microbiol.">
        <title>Small membrane proteins found by comparative genomics and ribosome binding site models.</title>
        <authorList>
            <person name="Hemm M.R."/>
            <person name="Paul B.J."/>
            <person name="Schneider T.D."/>
            <person name="Storz G."/>
            <person name="Rudd K.E."/>
        </authorList>
    </citation>
    <scope>IDENTIFICATION</scope>
    <scope>SUBCELLULAR LOCATION</scope>
    <scope>INDUCTION</scope>
    <source>
        <strain>K12 / MG1655 / ATCC 47076</strain>
    </source>
</reference>
<reference key="4">
    <citation type="journal article" date="2010" name="J. Bacteriol.">
        <title>Small stress response proteins in Escherichia coli: proteins missed by classical proteomic studies.</title>
        <authorList>
            <person name="Hemm M.R."/>
            <person name="Paul B.J."/>
            <person name="Miranda-Rios J."/>
            <person name="Zhang A."/>
            <person name="Soltanzad N."/>
            <person name="Storz G."/>
        </authorList>
    </citation>
    <scope>INDUCTION</scope>
    <source>
        <strain>K12 / MG1655 / ATCC 47076</strain>
    </source>
</reference>
<reference key="5">
    <citation type="journal article" date="2011" name="J. Biol. Chem.">
        <title>Membrane localization of small proteins in Escherichia coli.</title>
        <authorList>
            <person name="Fontaine F."/>
            <person name="Fuchs R.T."/>
            <person name="Storz G."/>
        </authorList>
    </citation>
    <scope>SUBCELLULAR LOCATION</scope>
    <source>
        <strain>K12 / MG1655 / ATCC 47076</strain>
    </source>
</reference>
<name>AZUC_ECOLI</name>
<sequence>MKLRKILKSMFNNYCKTFKDVPPGNMFR</sequence>
<evidence type="ECO:0000269" key="1">
    <source>
    </source>
</evidence>
<evidence type="ECO:0000269" key="2">
    <source>
    </source>
</evidence>
<evidence type="ECO:0000305" key="3">
    <source>
    </source>
</evidence>
<evidence type="ECO:0000305" key="4">
    <source>
    </source>
</evidence>
<proteinExistence type="evidence at protein level"/>
<feature type="chain" id="PRO_0000381976" description="Uncharacterized protein AzuC">
    <location>
        <begin position="1"/>
        <end position="28"/>
    </location>
</feature>
<organism>
    <name type="scientific">Escherichia coli (strain K12)</name>
    <dbReference type="NCBI Taxonomy" id="83333"/>
    <lineage>
        <taxon>Bacteria</taxon>
        <taxon>Pseudomonadati</taxon>
        <taxon>Pseudomonadota</taxon>
        <taxon>Gammaproteobacteria</taxon>
        <taxon>Enterobacterales</taxon>
        <taxon>Enterobacteriaceae</taxon>
        <taxon>Escherichia</taxon>
    </lineage>
</organism>